<organism>
    <name type="scientific">Bacillus subtilis (strain 168)</name>
    <dbReference type="NCBI Taxonomy" id="224308"/>
    <lineage>
        <taxon>Bacteria</taxon>
        <taxon>Bacillati</taxon>
        <taxon>Bacillota</taxon>
        <taxon>Bacilli</taxon>
        <taxon>Bacillales</taxon>
        <taxon>Bacillaceae</taxon>
        <taxon>Bacillus</taxon>
    </lineage>
</organism>
<feature type="chain" id="PRO_0000094728" description="Uncharacterized transporter YwcJ">
    <location>
        <begin position="1"/>
        <end position="256"/>
    </location>
</feature>
<feature type="transmembrane region" description="Helical" evidence="1">
    <location>
        <begin position="32"/>
        <end position="52"/>
    </location>
</feature>
<feature type="transmembrane region" description="Helical" evidence="1">
    <location>
        <begin position="59"/>
        <end position="79"/>
    </location>
</feature>
<feature type="transmembrane region" description="Helical" evidence="1">
    <location>
        <begin position="112"/>
        <end position="132"/>
    </location>
</feature>
<feature type="transmembrane region" description="Helical" evidence="1">
    <location>
        <begin position="156"/>
        <end position="176"/>
    </location>
</feature>
<feature type="transmembrane region" description="Helical" evidence="1">
    <location>
        <begin position="184"/>
        <end position="204"/>
    </location>
</feature>
<feature type="transmembrane region" description="Helical" evidence="1">
    <location>
        <begin position="207"/>
        <end position="227"/>
    </location>
</feature>
<feature type="transmembrane region" description="Helical" evidence="1">
    <location>
        <begin position="230"/>
        <end position="250"/>
    </location>
</feature>
<accession>P39608</accession>
<protein>
    <recommendedName>
        <fullName>Uncharacterized transporter YwcJ</fullName>
    </recommendedName>
</protein>
<proteinExistence type="inferred from homology"/>
<gene>
    <name type="primary">ywcJ</name>
    <name type="ordered locus">BSU38060</name>
    <name type="ORF">ipa-48r</name>
</gene>
<dbReference type="EMBL" id="J03006">
    <property type="status" value="NOT_ANNOTATED_CDS"/>
    <property type="molecule type" value="Genomic_DNA"/>
</dbReference>
<dbReference type="EMBL" id="X73124">
    <property type="protein sequence ID" value="CAA51604.1"/>
    <property type="molecule type" value="Genomic_DNA"/>
</dbReference>
<dbReference type="EMBL" id="AL009126">
    <property type="protein sequence ID" value="CAB15832.1"/>
    <property type="molecule type" value="Genomic_DNA"/>
</dbReference>
<dbReference type="PIR" id="S39703">
    <property type="entry name" value="S39703"/>
</dbReference>
<dbReference type="RefSeq" id="WP_003243563.1">
    <property type="nucleotide sequence ID" value="NZ_OZ025638.1"/>
</dbReference>
<dbReference type="SMR" id="P39608"/>
<dbReference type="FunCoup" id="P39608">
    <property type="interactions" value="27"/>
</dbReference>
<dbReference type="STRING" id="224308.BSU38060"/>
<dbReference type="TCDB" id="1.A.16.3.2">
    <property type="family name" value="the formate-nitrite transporter (fnt) family"/>
</dbReference>
<dbReference type="PaxDb" id="224308-BSU38060"/>
<dbReference type="EnsemblBacteria" id="CAB15832">
    <property type="protein sequence ID" value="CAB15832"/>
    <property type="gene ID" value="BSU_38060"/>
</dbReference>
<dbReference type="GeneID" id="937283"/>
<dbReference type="KEGG" id="bsu:BSU38060"/>
<dbReference type="PATRIC" id="fig|224308.179.peg.4120"/>
<dbReference type="eggNOG" id="COG2116">
    <property type="taxonomic scope" value="Bacteria"/>
</dbReference>
<dbReference type="InParanoid" id="P39608"/>
<dbReference type="OrthoDB" id="9786493at2"/>
<dbReference type="PhylomeDB" id="P39608"/>
<dbReference type="BioCyc" id="BSUB:BSU38060-MONOMER"/>
<dbReference type="Proteomes" id="UP000001570">
    <property type="component" value="Chromosome"/>
</dbReference>
<dbReference type="GO" id="GO:0005886">
    <property type="term" value="C:plasma membrane"/>
    <property type="evidence" value="ECO:0000318"/>
    <property type="project" value="GO_Central"/>
</dbReference>
<dbReference type="GO" id="GO:0015499">
    <property type="term" value="F:formate transmembrane transporter activity"/>
    <property type="evidence" value="ECO:0000318"/>
    <property type="project" value="GO_Central"/>
</dbReference>
<dbReference type="GO" id="GO:0015724">
    <property type="term" value="P:formate transport"/>
    <property type="evidence" value="ECO:0000318"/>
    <property type="project" value="GO_Central"/>
</dbReference>
<dbReference type="Gene3D" id="1.20.1080.10">
    <property type="entry name" value="Glycerol uptake facilitator protein"/>
    <property type="match status" value="1"/>
</dbReference>
<dbReference type="InterPro" id="IPR023271">
    <property type="entry name" value="Aquaporin-like"/>
</dbReference>
<dbReference type="InterPro" id="IPR000292">
    <property type="entry name" value="For/NO2_transpt"/>
</dbReference>
<dbReference type="InterPro" id="IPR024002">
    <property type="entry name" value="For/NO2_transpt_CS"/>
</dbReference>
<dbReference type="NCBIfam" id="TIGR00790">
    <property type="entry name" value="fnt"/>
    <property type="match status" value="1"/>
</dbReference>
<dbReference type="PANTHER" id="PTHR30520">
    <property type="entry name" value="FORMATE TRANSPORTER-RELATED"/>
    <property type="match status" value="1"/>
</dbReference>
<dbReference type="PANTHER" id="PTHR30520:SF8">
    <property type="entry name" value="NITRITE TRANSPORTER NIRC"/>
    <property type="match status" value="1"/>
</dbReference>
<dbReference type="Pfam" id="PF01226">
    <property type="entry name" value="Form_Nir_trans"/>
    <property type="match status" value="1"/>
</dbReference>
<dbReference type="PROSITE" id="PS01005">
    <property type="entry name" value="FORMATE_NITRITE_TP_1"/>
    <property type="match status" value="1"/>
</dbReference>
<dbReference type="PROSITE" id="PS01006">
    <property type="entry name" value="FORMATE_NITRITE_TP_2"/>
    <property type="match status" value="1"/>
</dbReference>
<comment type="subcellular location">
    <subcellularLocation>
        <location evidence="2">Cell membrane</location>
        <topology evidence="2">Multi-pass membrane protein</topology>
    </subcellularLocation>
</comment>
<comment type="similarity">
    <text evidence="2">Belongs to the FNT transporter (TC 1.A.16) family.</text>
</comment>
<name>YWCJ_BACSU</name>
<sequence>METQALQKVEQYALKKQNIFASSKIRYVLRSILASIFIGFGITAASKTGSYFFMADSPFAFPAAAVTFGAAILMIAYGGGDLFTGNTFYFTYTALRKKISWRDTLYLWMSSYAGNLIGAILFAILISATGLFEEPSVHSFLIHLAEHKMEPPASELFFRGMLCNWLVCLAFFIPMSLKGEGAKLFTMMLFVFCFFISGFEHSIANMCTFAISLLIEHPDTVTLMGAVRNLIPVTLGNLTAGIVMMGWMYYTLNPDQ</sequence>
<keyword id="KW-1003">Cell membrane</keyword>
<keyword id="KW-0472">Membrane</keyword>
<keyword id="KW-1185">Reference proteome</keyword>
<keyword id="KW-0812">Transmembrane</keyword>
<keyword id="KW-1133">Transmembrane helix</keyword>
<keyword id="KW-0813">Transport</keyword>
<evidence type="ECO:0000255" key="1"/>
<evidence type="ECO:0000305" key="2"/>
<reference key="1">
    <citation type="journal article" date="1990" name="J. Bacteriol.">
        <title>The sacT gene regulating the sacPA operon in Bacillus subtilis shares strong homology with transcriptional antiterminators.</title>
        <authorList>
            <person name="Debarbouille M."/>
            <person name="Arnaud M."/>
            <person name="Fouet A."/>
            <person name="Klier A."/>
            <person name="Rapoport G."/>
        </authorList>
    </citation>
    <scope>NUCLEOTIDE SEQUENCE [GENOMIC DNA]</scope>
</reference>
<reference key="2">
    <citation type="journal article" date="1993" name="Mol. Microbiol.">
        <title>Bacillus subtilis genome project: cloning and sequencing of the 97 kb region from 325 degrees to 333 degrees.</title>
        <authorList>
            <person name="Glaser P."/>
            <person name="Kunst F."/>
            <person name="Arnaud M."/>
            <person name="Coudart M.P."/>
            <person name="Gonzales W."/>
            <person name="Hullo M.-F."/>
            <person name="Ionescu M."/>
            <person name="Lubochinsky B."/>
            <person name="Marcelino L."/>
            <person name="Moszer I."/>
            <person name="Presecan E."/>
            <person name="Santana M."/>
            <person name="Schneider E."/>
            <person name="Schweizer J."/>
            <person name="Vertes A."/>
            <person name="Rapoport G."/>
            <person name="Danchin A."/>
        </authorList>
    </citation>
    <scope>NUCLEOTIDE SEQUENCE [GENOMIC DNA]</scope>
    <source>
        <strain>168</strain>
    </source>
</reference>
<reference key="3">
    <citation type="journal article" date="1997" name="Nature">
        <title>The complete genome sequence of the Gram-positive bacterium Bacillus subtilis.</title>
        <authorList>
            <person name="Kunst F."/>
            <person name="Ogasawara N."/>
            <person name="Moszer I."/>
            <person name="Albertini A.M."/>
            <person name="Alloni G."/>
            <person name="Azevedo V."/>
            <person name="Bertero M.G."/>
            <person name="Bessieres P."/>
            <person name="Bolotin A."/>
            <person name="Borchert S."/>
            <person name="Borriss R."/>
            <person name="Boursier L."/>
            <person name="Brans A."/>
            <person name="Braun M."/>
            <person name="Brignell S.C."/>
            <person name="Bron S."/>
            <person name="Brouillet S."/>
            <person name="Bruschi C.V."/>
            <person name="Caldwell B."/>
            <person name="Capuano V."/>
            <person name="Carter N.M."/>
            <person name="Choi S.-K."/>
            <person name="Codani J.-J."/>
            <person name="Connerton I.F."/>
            <person name="Cummings N.J."/>
            <person name="Daniel R.A."/>
            <person name="Denizot F."/>
            <person name="Devine K.M."/>
            <person name="Duesterhoeft A."/>
            <person name="Ehrlich S.D."/>
            <person name="Emmerson P.T."/>
            <person name="Entian K.-D."/>
            <person name="Errington J."/>
            <person name="Fabret C."/>
            <person name="Ferrari E."/>
            <person name="Foulger D."/>
            <person name="Fritz C."/>
            <person name="Fujita M."/>
            <person name="Fujita Y."/>
            <person name="Fuma S."/>
            <person name="Galizzi A."/>
            <person name="Galleron N."/>
            <person name="Ghim S.-Y."/>
            <person name="Glaser P."/>
            <person name="Goffeau A."/>
            <person name="Golightly E.J."/>
            <person name="Grandi G."/>
            <person name="Guiseppi G."/>
            <person name="Guy B.J."/>
            <person name="Haga K."/>
            <person name="Haiech J."/>
            <person name="Harwood C.R."/>
            <person name="Henaut A."/>
            <person name="Hilbert H."/>
            <person name="Holsappel S."/>
            <person name="Hosono S."/>
            <person name="Hullo M.-F."/>
            <person name="Itaya M."/>
            <person name="Jones L.-M."/>
            <person name="Joris B."/>
            <person name="Karamata D."/>
            <person name="Kasahara Y."/>
            <person name="Klaerr-Blanchard M."/>
            <person name="Klein C."/>
            <person name="Kobayashi Y."/>
            <person name="Koetter P."/>
            <person name="Koningstein G."/>
            <person name="Krogh S."/>
            <person name="Kumano M."/>
            <person name="Kurita K."/>
            <person name="Lapidus A."/>
            <person name="Lardinois S."/>
            <person name="Lauber J."/>
            <person name="Lazarevic V."/>
            <person name="Lee S.-M."/>
            <person name="Levine A."/>
            <person name="Liu H."/>
            <person name="Masuda S."/>
            <person name="Mauel C."/>
            <person name="Medigue C."/>
            <person name="Medina N."/>
            <person name="Mellado R.P."/>
            <person name="Mizuno M."/>
            <person name="Moestl D."/>
            <person name="Nakai S."/>
            <person name="Noback M."/>
            <person name="Noone D."/>
            <person name="O'Reilly M."/>
            <person name="Ogawa K."/>
            <person name="Ogiwara A."/>
            <person name="Oudega B."/>
            <person name="Park S.-H."/>
            <person name="Parro V."/>
            <person name="Pohl T.M."/>
            <person name="Portetelle D."/>
            <person name="Porwollik S."/>
            <person name="Prescott A.M."/>
            <person name="Presecan E."/>
            <person name="Pujic P."/>
            <person name="Purnelle B."/>
            <person name="Rapoport G."/>
            <person name="Rey M."/>
            <person name="Reynolds S."/>
            <person name="Rieger M."/>
            <person name="Rivolta C."/>
            <person name="Rocha E."/>
            <person name="Roche B."/>
            <person name="Rose M."/>
            <person name="Sadaie Y."/>
            <person name="Sato T."/>
            <person name="Scanlan E."/>
            <person name="Schleich S."/>
            <person name="Schroeter R."/>
            <person name="Scoffone F."/>
            <person name="Sekiguchi J."/>
            <person name="Sekowska A."/>
            <person name="Seror S.J."/>
            <person name="Serror P."/>
            <person name="Shin B.-S."/>
            <person name="Soldo B."/>
            <person name="Sorokin A."/>
            <person name="Tacconi E."/>
            <person name="Takagi T."/>
            <person name="Takahashi H."/>
            <person name="Takemaru K."/>
            <person name="Takeuchi M."/>
            <person name="Tamakoshi A."/>
            <person name="Tanaka T."/>
            <person name="Terpstra P."/>
            <person name="Tognoni A."/>
            <person name="Tosato V."/>
            <person name="Uchiyama S."/>
            <person name="Vandenbol M."/>
            <person name="Vannier F."/>
            <person name="Vassarotti A."/>
            <person name="Viari A."/>
            <person name="Wambutt R."/>
            <person name="Wedler E."/>
            <person name="Wedler H."/>
            <person name="Weitzenegger T."/>
            <person name="Winters P."/>
            <person name="Wipat A."/>
            <person name="Yamamoto H."/>
            <person name="Yamane K."/>
            <person name="Yasumoto K."/>
            <person name="Yata K."/>
            <person name="Yoshida K."/>
            <person name="Yoshikawa H.-F."/>
            <person name="Zumstein E."/>
            <person name="Yoshikawa H."/>
            <person name="Danchin A."/>
        </authorList>
    </citation>
    <scope>NUCLEOTIDE SEQUENCE [LARGE SCALE GENOMIC DNA]</scope>
    <source>
        <strain>168</strain>
    </source>
</reference>